<protein>
    <recommendedName>
        <fullName evidence="1">Glycogen debranching enzyme</fullName>
        <ecNumber evidence="1">3.2.1.196</ecNumber>
    </recommendedName>
    <alternativeName>
        <fullName evidence="1">Limit dextrin alpha-1,6-maltotetraose-hydrolase</fullName>
    </alternativeName>
</protein>
<keyword id="KW-0119">Carbohydrate metabolism</keyword>
<keyword id="KW-0321">Glycogen metabolism</keyword>
<keyword id="KW-0326">Glycosidase</keyword>
<keyword id="KW-0378">Hydrolase</keyword>
<sequence>MAELQTGKPTPLGASFDGQGVNFALFSADAERVELCIFDERQQEQRLELTARSGDIWHGYLPAAQPGLRYGFRVDGPFEPSQGLRFNPHKLLLDPCARQLDGWVVDDDCLQGGIDQRDERDSADIMAKCVVTAEDYDWQDDQHPHTLWHQTVIYEAHVRGLTQLHPDIPEDIRGSYAALGHPVMIDYLTSLGVTALELLPVQQHADEPRLQQLGLRNYWGYNVLLPFAVDNSLAAGDDALNEFRDAVKALHRAGIEVILDVVFNHSAELDVEGPTLCQRGIDNRSYYWLGENGEYHNWTGCGNVLRLNHPAVIDWVMDCLRFWREVCHVDGFRFDLATVLGRTPDFTAAAPLLSAMKNDSRLQGCKLIAEPWDIGHGGYQLGQFPTPFAEWSDRYRDDMRRFWLHGDISLGAFARRFAASSDIFQQHDRLPFASINKLTAHDGFTLRDLVSFNHKHNDANGEGNRDGTDSNFSNNHGTEGLEADDDILQRRLASQKALLTTLILSQGTPMLLAGDELGHSQQGNNNAYCQDNELTWLHWENANSALREFVAGLIQLRRTIPALQQETWWQEGDGAVQWLNREGQPLTPQQWEQGEHQLQILLSGRWLVLFNASLHAGEFMLPEGHWQVSPPFDETNPPEGGIWHGQAQAVCVLIKQTA</sequence>
<proteinExistence type="inferred from homology"/>
<comment type="function">
    <text evidence="1">Removes maltotriose and maltotetraose chains that are attached by 1,6-alpha-linkage to the limit dextrin main chain, generating a debranched limit dextrin.</text>
</comment>
<comment type="catalytic activity">
    <reaction evidence="1">
        <text>Hydrolysis of (1-&gt;6)-alpha-D-glucosidic linkages to branches with degrees of polymerization of three or four glucose residues in limit dextrin.</text>
        <dbReference type="EC" id="3.2.1.196"/>
    </reaction>
</comment>
<comment type="pathway">
    <text evidence="1">Glycan degradation; glycogen degradation.</text>
</comment>
<comment type="similarity">
    <text evidence="1">Belongs to the glycosyl hydrolase 13 family.</text>
</comment>
<name>GLGX_PECCP</name>
<dbReference type="EC" id="3.2.1.196" evidence="1"/>
<dbReference type="EMBL" id="CP001657">
    <property type="protein sequence ID" value="ACT14951.1"/>
    <property type="molecule type" value="Genomic_DNA"/>
</dbReference>
<dbReference type="RefSeq" id="WP_015842032.1">
    <property type="nucleotide sequence ID" value="NC_012917.1"/>
</dbReference>
<dbReference type="SMR" id="C6DH78"/>
<dbReference type="STRING" id="561230.PC1_3936"/>
<dbReference type="CAZy" id="CBM48">
    <property type="family name" value="Carbohydrate-Binding Module Family 48"/>
</dbReference>
<dbReference type="CAZy" id="GH13">
    <property type="family name" value="Glycoside Hydrolase Family 13"/>
</dbReference>
<dbReference type="KEGG" id="pct:PC1_3936"/>
<dbReference type="eggNOG" id="COG1523">
    <property type="taxonomic scope" value="Bacteria"/>
</dbReference>
<dbReference type="HOGENOM" id="CLU_011725_1_1_6"/>
<dbReference type="OrthoDB" id="3236218at2"/>
<dbReference type="UniPathway" id="UPA00165"/>
<dbReference type="Proteomes" id="UP000002736">
    <property type="component" value="Chromosome"/>
</dbReference>
<dbReference type="GO" id="GO:0004133">
    <property type="term" value="F:glycogen debranching enzyme activity"/>
    <property type="evidence" value="ECO:0007669"/>
    <property type="project" value="UniProtKB-UniRule"/>
</dbReference>
<dbReference type="GO" id="GO:0004553">
    <property type="term" value="F:hydrolase activity, hydrolyzing O-glycosyl compounds"/>
    <property type="evidence" value="ECO:0007669"/>
    <property type="project" value="InterPro"/>
</dbReference>
<dbReference type="GO" id="GO:0005980">
    <property type="term" value="P:glycogen catabolic process"/>
    <property type="evidence" value="ECO:0007669"/>
    <property type="project" value="UniProtKB-UniRule"/>
</dbReference>
<dbReference type="CDD" id="cd11326">
    <property type="entry name" value="AmyAc_Glg_debranch"/>
    <property type="match status" value="1"/>
</dbReference>
<dbReference type="CDD" id="cd02856">
    <property type="entry name" value="E_set_GDE_Isoamylase_N"/>
    <property type="match status" value="1"/>
</dbReference>
<dbReference type="Gene3D" id="3.20.20.80">
    <property type="entry name" value="Glycosidases"/>
    <property type="match status" value="1"/>
</dbReference>
<dbReference type="Gene3D" id="2.60.40.1180">
    <property type="entry name" value="Golgi alpha-mannosidase II"/>
    <property type="match status" value="1"/>
</dbReference>
<dbReference type="Gene3D" id="2.60.40.10">
    <property type="entry name" value="Immunoglobulins"/>
    <property type="match status" value="1"/>
</dbReference>
<dbReference type="HAMAP" id="MF_01248">
    <property type="entry name" value="GlgX"/>
    <property type="match status" value="1"/>
</dbReference>
<dbReference type="InterPro" id="IPR040784">
    <property type="entry name" value="GlgX_C"/>
</dbReference>
<dbReference type="InterPro" id="IPR044505">
    <property type="entry name" value="GlgX_Isoamylase_N_E_set"/>
</dbReference>
<dbReference type="InterPro" id="IPR006047">
    <property type="entry name" value="Glyco_hydro_13_cat_dom"/>
</dbReference>
<dbReference type="InterPro" id="IPR004193">
    <property type="entry name" value="Glyco_hydro_13_N"/>
</dbReference>
<dbReference type="InterPro" id="IPR013780">
    <property type="entry name" value="Glyco_hydro_b"/>
</dbReference>
<dbReference type="InterPro" id="IPR022844">
    <property type="entry name" value="Glycogen_debranch_bac"/>
</dbReference>
<dbReference type="InterPro" id="IPR011837">
    <property type="entry name" value="Glycogen_debranch_GlgX"/>
</dbReference>
<dbReference type="InterPro" id="IPR017853">
    <property type="entry name" value="Glycoside_hydrolase_SF"/>
</dbReference>
<dbReference type="InterPro" id="IPR013783">
    <property type="entry name" value="Ig-like_fold"/>
</dbReference>
<dbReference type="InterPro" id="IPR014756">
    <property type="entry name" value="Ig_E-set"/>
</dbReference>
<dbReference type="NCBIfam" id="TIGR02100">
    <property type="entry name" value="glgX_debranch"/>
    <property type="match status" value="1"/>
</dbReference>
<dbReference type="NCBIfam" id="NF002983">
    <property type="entry name" value="PRK03705.1"/>
    <property type="match status" value="1"/>
</dbReference>
<dbReference type="PANTHER" id="PTHR43002">
    <property type="entry name" value="GLYCOGEN DEBRANCHING ENZYME"/>
    <property type="match status" value="1"/>
</dbReference>
<dbReference type="Pfam" id="PF00128">
    <property type="entry name" value="Alpha-amylase"/>
    <property type="match status" value="1"/>
</dbReference>
<dbReference type="Pfam" id="PF02922">
    <property type="entry name" value="CBM_48"/>
    <property type="match status" value="1"/>
</dbReference>
<dbReference type="Pfam" id="PF18390">
    <property type="entry name" value="GlgX_C"/>
    <property type="match status" value="1"/>
</dbReference>
<dbReference type="SMART" id="SM00642">
    <property type="entry name" value="Aamy"/>
    <property type="match status" value="1"/>
</dbReference>
<dbReference type="SUPFAM" id="SSF51445">
    <property type="entry name" value="(Trans)glycosidases"/>
    <property type="match status" value="1"/>
</dbReference>
<dbReference type="SUPFAM" id="SSF81296">
    <property type="entry name" value="E set domains"/>
    <property type="match status" value="1"/>
</dbReference>
<dbReference type="SUPFAM" id="SSF51011">
    <property type="entry name" value="Glycosyl hydrolase domain"/>
    <property type="match status" value="1"/>
</dbReference>
<reference key="1">
    <citation type="submission" date="2009-07" db="EMBL/GenBank/DDBJ databases">
        <title>Complete sequence of Pectobacterium carotovorum subsp. carotovorum PC1.</title>
        <authorList>
            <consortium name="US DOE Joint Genome Institute"/>
            <person name="Lucas S."/>
            <person name="Copeland A."/>
            <person name="Lapidus A."/>
            <person name="Glavina del Rio T."/>
            <person name="Tice H."/>
            <person name="Bruce D."/>
            <person name="Goodwin L."/>
            <person name="Pitluck S."/>
            <person name="Munk A.C."/>
            <person name="Brettin T."/>
            <person name="Detter J.C."/>
            <person name="Han C."/>
            <person name="Tapia R."/>
            <person name="Larimer F."/>
            <person name="Land M."/>
            <person name="Hauser L."/>
            <person name="Kyrpides N."/>
            <person name="Mikhailova N."/>
            <person name="Balakrishnan V."/>
            <person name="Glasner J."/>
            <person name="Perna N.T."/>
        </authorList>
    </citation>
    <scope>NUCLEOTIDE SEQUENCE [LARGE SCALE GENOMIC DNA]</scope>
    <source>
        <strain>PC1</strain>
    </source>
</reference>
<accession>C6DH78</accession>
<feature type="chain" id="PRO_1000214105" description="Glycogen debranching enzyme">
    <location>
        <begin position="1"/>
        <end position="658"/>
    </location>
</feature>
<feature type="region of interest" description="Disordered" evidence="2">
    <location>
        <begin position="457"/>
        <end position="478"/>
    </location>
</feature>
<feature type="compositionally biased region" description="Basic and acidic residues" evidence="2">
    <location>
        <begin position="457"/>
        <end position="468"/>
    </location>
</feature>
<feature type="active site" description="Nucleophile" evidence="1">
    <location>
        <position position="335"/>
    </location>
</feature>
<feature type="active site" description="Proton donor" evidence="1">
    <location>
        <position position="370"/>
    </location>
</feature>
<feature type="site" description="Transition state stabilizer" evidence="1">
    <location>
        <position position="442"/>
    </location>
</feature>
<organism>
    <name type="scientific">Pectobacterium carotovorum subsp. carotovorum (strain PC1)</name>
    <dbReference type="NCBI Taxonomy" id="561230"/>
    <lineage>
        <taxon>Bacteria</taxon>
        <taxon>Pseudomonadati</taxon>
        <taxon>Pseudomonadota</taxon>
        <taxon>Gammaproteobacteria</taxon>
        <taxon>Enterobacterales</taxon>
        <taxon>Pectobacteriaceae</taxon>
        <taxon>Pectobacterium</taxon>
    </lineage>
</organism>
<evidence type="ECO:0000255" key="1">
    <source>
        <dbReference type="HAMAP-Rule" id="MF_01248"/>
    </source>
</evidence>
<evidence type="ECO:0000256" key="2">
    <source>
        <dbReference type="SAM" id="MobiDB-lite"/>
    </source>
</evidence>
<gene>
    <name evidence="1" type="primary">glgX</name>
    <name type="ordered locus">PC1_3936</name>
</gene>